<reference key="1">
    <citation type="journal article" date="2000" name="Hum. Genet.">
        <title>Characterization of TH1 and CTSZ, two non-imprinted genes downstream of GNAS1 in chromosome 20q13.</title>
        <authorList>
            <person name="Bonthron D.T."/>
            <person name="Hayward B.E."/>
            <person name="Moran V."/>
            <person name="Strain L."/>
        </authorList>
    </citation>
    <scope>NUCLEOTIDE SEQUENCE [MRNA]</scope>
    <source>
        <strain>C57BL/6J</strain>
        <strain>FVB/N</strain>
    </source>
</reference>
<reference key="2">
    <citation type="journal article" date="2005" name="Science">
        <title>The transcriptional landscape of the mammalian genome.</title>
        <authorList>
            <person name="Carninci P."/>
            <person name="Kasukawa T."/>
            <person name="Katayama S."/>
            <person name="Gough J."/>
            <person name="Frith M.C."/>
            <person name="Maeda N."/>
            <person name="Oyama R."/>
            <person name="Ravasi T."/>
            <person name="Lenhard B."/>
            <person name="Wells C."/>
            <person name="Kodzius R."/>
            <person name="Shimokawa K."/>
            <person name="Bajic V.B."/>
            <person name="Brenner S.E."/>
            <person name="Batalov S."/>
            <person name="Forrest A.R."/>
            <person name="Zavolan M."/>
            <person name="Davis M.J."/>
            <person name="Wilming L.G."/>
            <person name="Aidinis V."/>
            <person name="Allen J.E."/>
            <person name="Ambesi-Impiombato A."/>
            <person name="Apweiler R."/>
            <person name="Aturaliya R.N."/>
            <person name="Bailey T.L."/>
            <person name="Bansal M."/>
            <person name="Baxter L."/>
            <person name="Beisel K.W."/>
            <person name="Bersano T."/>
            <person name="Bono H."/>
            <person name="Chalk A.M."/>
            <person name="Chiu K.P."/>
            <person name="Choudhary V."/>
            <person name="Christoffels A."/>
            <person name="Clutterbuck D.R."/>
            <person name="Crowe M.L."/>
            <person name="Dalla E."/>
            <person name="Dalrymple B.P."/>
            <person name="de Bono B."/>
            <person name="Della Gatta G."/>
            <person name="di Bernardo D."/>
            <person name="Down T."/>
            <person name="Engstrom P."/>
            <person name="Fagiolini M."/>
            <person name="Faulkner G."/>
            <person name="Fletcher C.F."/>
            <person name="Fukushima T."/>
            <person name="Furuno M."/>
            <person name="Futaki S."/>
            <person name="Gariboldi M."/>
            <person name="Georgii-Hemming P."/>
            <person name="Gingeras T.R."/>
            <person name="Gojobori T."/>
            <person name="Green R.E."/>
            <person name="Gustincich S."/>
            <person name="Harbers M."/>
            <person name="Hayashi Y."/>
            <person name="Hensch T.K."/>
            <person name="Hirokawa N."/>
            <person name="Hill D."/>
            <person name="Huminiecki L."/>
            <person name="Iacono M."/>
            <person name="Ikeo K."/>
            <person name="Iwama A."/>
            <person name="Ishikawa T."/>
            <person name="Jakt M."/>
            <person name="Kanapin A."/>
            <person name="Katoh M."/>
            <person name="Kawasawa Y."/>
            <person name="Kelso J."/>
            <person name="Kitamura H."/>
            <person name="Kitano H."/>
            <person name="Kollias G."/>
            <person name="Krishnan S.P."/>
            <person name="Kruger A."/>
            <person name="Kummerfeld S.K."/>
            <person name="Kurochkin I.V."/>
            <person name="Lareau L.F."/>
            <person name="Lazarevic D."/>
            <person name="Lipovich L."/>
            <person name="Liu J."/>
            <person name="Liuni S."/>
            <person name="McWilliam S."/>
            <person name="Madan Babu M."/>
            <person name="Madera M."/>
            <person name="Marchionni L."/>
            <person name="Matsuda H."/>
            <person name="Matsuzawa S."/>
            <person name="Miki H."/>
            <person name="Mignone F."/>
            <person name="Miyake S."/>
            <person name="Morris K."/>
            <person name="Mottagui-Tabar S."/>
            <person name="Mulder N."/>
            <person name="Nakano N."/>
            <person name="Nakauchi H."/>
            <person name="Ng P."/>
            <person name="Nilsson R."/>
            <person name="Nishiguchi S."/>
            <person name="Nishikawa S."/>
            <person name="Nori F."/>
            <person name="Ohara O."/>
            <person name="Okazaki Y."/>
            <person name="Orlando V."/>
            <person name="Pang K.C."/>
            <person name="Pavan W.J."/>
            <person name="Pavesi G."/>
            <person name="Pesole G."/>
            <person name="Petrovsky N."/>
            <person name="Piazza S."/>
            <person name="Reed J."/>
            <person name="Reid J.F."/>
            <person name="Ring B.Z."/>
            <person name="Ringwald M."/>
            <person name="Rost B."/>
            <person name="Ruan Y."/>
            <person name="Salzberg S.L."/>
            <person name="Sandelin A."/>
            <person name="Schneider C."/>
            <person name="Schoenbach C."/>
            <person name="Sekiguchi K."/>
            <person name="Semple C.A."/>
            <person name="Seno S."/>
            <person name="Sessa L."/>
            <person name="Sheng Y."/>
            <person name="Shibata Y."/>
            <person name="Shimada H."/>
            <person name="Shimada K."/>
            <person name="Silva D."/>
            <person name="Sinclair B."/>
            <person name="Sperling S."/>
            <person name="Stupka E."/>
            <person name="Sugiura K."/>
            <person name="Sultana R."/>
            <person name="Takenaka Y."/>
            <person name="Taki K."/>
            <person name="Tammoja K."/>
            <person name="Tan S.L."/>
            <person name="Tang S."/>
            <person name="Taylor M.S."/>
            <person name="Tegner J."/>
            <person name="Teichmann S.A."/>
            <person name="Ueda H.R."/>
            <person name="van Nimwegen E."/>
            <person name="Verardo R."/>
            <person name="Wei C.L."/>
            <person name="Yagi K."/>
            <person name="Yamanishi H."/>
            <person name="Zabarovsky E."/>
            <person name="Zhu S."/>
            <person name="Zimmer A."/>
            <person name="Hide W."/>
            <person name="Bult C."/>
            <person name="Grimmond S.M."/>
            <person name="Teasdale R.D."/>
            <person name="Liu E.T."/>
            <person name="Brusic V."/>
            <person name="Quackenbush J."/>
            <person name="Wahlestedt C."/>
            <person name="Mattick J.S."/>
            <person name="Hume D.A."/>
            <person name="Kai C."/>
            <person name="Sasaki D."/>
            <person name="Tomaru Y."/>
            <person name="Fukuda S."/>
            <person name="Kanamori-Katayama M."/>
            <person name="Suzuki M."/>
            <person name="Aoki J."/>
            <person name="Arakawa T."/>
            <person name="Iida J."/>
            <person name="Imamura K."/>
            <person name="Itoh M."/>
            <person name="Kato T."/>
            <person name="Kawaji H."/>
            <person name="Kawagashira N."/>
            <person name="Kawashima T."/>
            <person name="Kojima M."/>
            <person name="Kondo S."/>
            <person name="Konno H."/>
            <person name="Nakano K."/>
            <person name="Ninomiya N."/>
            <person name="Nishio T."/>
            <person name="Okada M."/>
            <person name="Plessy C."/>
            <person name="Shibata K."/>
            <person name="Shiraki T."/>
            <person name="Suzuki S."/>
            <person name="Tagami M."/>
            <person name="Waki K."/>
            <person name="Watahiki A."/>
            <person name="Okamura-Oho Y."/>
            <person name="Suzuki H."/>
            <person name="Kawai J."/>
            <person name="Hayashizaki Y."/>
        </authorList>
    </citation>
    <scope>NUCLEOTIDE SEQUENCE [LARGE SCALE MRNA]</scope>
    <source>
        <strain>C57BL/6J</strain>
        <tissue>Embryonic stem cell</tissue>
    </source>
</reference>
<reference key="3">
    <citation type="journal article" date="2009" name="PLoS Biol.">
        <title>Lineage-specific biology revealed by a finished genome assembly of the mouse.</title>
        <authorList>
            <person name="Church D.M."/>
            <person name="Goodstadt L."/>
            <person name="Hillier L.W."/>
            <person name="Zody M.C."/>
            <person name="Goldstein S."/>
            <person name="She X."/>
            <person name="Bult C.J."/>
            <person name="Agarwala R."/>
            <person name="Cherry J.L."/>
            <person name="DiCuccio M."/>
            <person name="Hlavina W."/>
            <person name="Kapustin Y."/>
            <person name="Meric P."/>
            <person name="Maglott D."/>
            <person name="Birtle Z."/>
            <person name="Marques A.C."/>
            <person name="Graves T."/>
            <person name="Zhou S."/>
            <person name="Teague B."/>
            <person name="Potamousis K."/>
            <person name="Churas C."/>
            <person name="Place M."/>
            <person name="Herschleb J."/>
            <person name="Runnheim R."/>
            <person name="Forrest D."/>
            <person name="Amos-Landgraf J."/>
            <person name="Schwartz D.C."/>
            <person name="Cheng Z."/>
            <person name="Lindblad-Toh K."/>
            <person name="Eichler E.E."/>
            <person name="Ponting C.P."/>
        </authorList>
    </citation>
    <scope>NUCLEOTIDE SEQUENCE [LARGE SCALE GENOMIC DNA]</scope>
    <source>
        <strain>C57BL/6J</strain>
    </source>
</reference>
<reference key="4">
    <citation type="journal article" date="2004" name="Genome Res.">
        <title>The status, quality, and expansion of the NIH full-length cDNA project: the Mammalian Gene Collection (MGC).</title>
        <authorList>
            <consortium name="The MGC Project Team"/>
        </authorList>
    </citation>
    <scope>NUCLEOTIDE SEQUENCE [LARGE SCALE MRNA]</scope>
    <source>
        <tissue>Mammary tumor</tissue>
    </source>
</reference>
<reference key="5">
    <citation type="journal article" date="2010" name="Cell">
        <title>A tissue-specific atlas of mouse protein phosphorylation and expression.</title>
        <authorList>
            <person name="Huttlin E.L."/>
            <person name="Jedrychowski M.P."/>
            <person name="Elias J.E."/>
            <person name="Goswami T."/>
            <person name="Rad R."/>
            <person name="Beausoleil S.A."/>
            <person name="Villen J."/>
            <person name="Haas W."/>
            <person name="Sowa M.E."/>
            <person name="Gygi S.P."/>
        </authorList>
    </citation>
    <scope>IDENTIFICATION BY MASS SPECTROMETRY [LARGE SCALE ANALYSIS]</scope>
    <source>
        <tissue>Spleen</tissue>
        <tissue>Testis</tissue>
    </source>
</reference>
<reference key="6">
    <citation type="journal article" date="2007" name="Biochem. Biophys. Res. Commun.">
        <title>Characterization of hampin/MSL1 as a node in the nuclear interactome.</title>
        <authorList>
            <person name="Dmitriev R.I."/>
            <person name="Korneenko T.V."/>
            <person name="Bessonov A.A."/>
            <person name="Shakhparonov M.I."/>
            <person name="Modyanov N.N."/>
            <person name="Pestov N.B."/>
        </authorList>
    </citation>
    <scope>INTERACTION WITH KAT8</scope>
</reference>
<reference key="7">
    <citation type="journal article" date="2015" name="PLoS ONE">
        <title>Translational initiation at a non-AUG start codon for human and mouse negative elongation factor-B.</title>
        <authorList>
            <person name="Pan H."/>
            <person name="Zhao X."/>
            <person name="Zhang X."/>
            <person name="Abouelsoud M."/>
            <person name="Sun J."/>
            <person name="April C."/>
            <person name="Amleh A."/>
            <person name="Fan J.B."/>
            <person name="Hu Y."/>
            <person name="Li R."/>
        </authorList>
    </citation>
    <scope>INTERACTION WITH NELFB</scope>
</reference>
<dbReference type="EMBL" id="AJ238741">
    <property type="protein sequence ID" value="CAB65252.1"/>
    <property type="status" value="ALT_INIT"/>
    <property type="molecule type" value="mRNA"/>
</dbReference>
<dbReference type="EMBL" id="AJ238742">
    <property type="protein sequence ID" value="CAB65253.1"/>
    <property type="status" value="ALT_INIT"/>
    <property type="molecule type" value="mRNA"/>
</dbReference>
<dbReference type="EMBL" id="AJ238743">
    <property type="protein sequence ID" value="CAB65254.1"/>
    <property type="status" value="ALT_INIT"/>
    <property type="molecule type" value="mRNA"/>
</dbReference>
<dbReference type="EMBL" id="AK010360">
    <property type="protein sequence ID" value="BAB26880.1"/>
    <property type="status" value="ALT_INIT"/>
    <property type="molecule type" value="mRNA"/>
</dbReference>
<dbReference type="EMBL" id="AK049418">
    <property type="protein sequence ID" value="BAC33744.1"/>
    <property type="status" value="ALT_INIT"/>
    <property type="molecule type" value="mRNA"/>
</dbReference>
<dbReference type="EMBL" id="AL844534">
    <property type="status" value="NOT_ANNOTATED_CDS"/>
    <property type="molecule type" value="Genomic_DNA"/>
</dbReference>
<dbReference type="EMBL" id="BC006959">
    <property type="protein sequence ID" value="AAH06959.1"/>
    <property type="molecule type" value="mRNA"/>
</dbReference>
<dbReference type="EMBL" id="BC031747">
    <property type="protein sequence ID" value="AAH31747.1"/>
    <property type="status" value="ALT_INIT"/>
    <property type="molecule type" value="mRNA"/>
</dbReference>
<dbReference type="RefSeq" id="NP_065605.2">
    <property type="nucleotide sequence ID" value="NM_020580.3"/>
</dbReference>
<dbReference type="SMR" id="Q922L6"/>
<dbReference type="BioGRID" id="208252">
    <property type="interactions" value="3"/>
</dbReference>
<dbReference type="FunCoup" id="Q922L6">
    <property type="interactions" value="4007"/>
</dbReference>
<dbReference type="STRING" id="10090.ENSMUSP00000104703"/>
<dbReference type="GlyGen" id="Q922L6">
    <property type="glycosylation" value="1 site"/>
</dbReference>
<dbReference type="PhosphoSitePlus" id="Q922L6"/>
<dbReference type="PaxDb" id="10090-ENSMUSP00000016397"/>
<dbReference type="ProteomicsDB" id="252880"/>
<dbReference type="Pumba" id="Q922L6"/>
<dbReference type="Antibodypedia" id="29232">
    <property type="antibodies" value="182 antibodies from 29 providers"/>
</dbReference>
<dbReference type="DNASU" id="57314"/>
<dbReference type="Ensembl" id="ENSMUST00000109075.8">
    <property type="protein sequence ID" value="ENSMUSP00000104703.2"/>
    <property type="gene ID" value="ENSMUSG00000016253.13"/>
</dbReference>
<dbReference type="GeneID" id="57314"/>
<dbReference type="KEGG" id="mmu:57314"/>
<dbReference type="UCSC" id="uc008ofc.1">
    <property type="organism name" value="mouse"/>
</dbReference>
<dbReference type="AGR" id="MGI:1926424"/>
<dbReference type="CTD" id="51497"/>
<dbReference type="MGI" id="MGI:1926424">
    <property type="gene designation" value="Nelfcd"/>
</dbReference>
<dbReference type="VEuPathDB" id="HostDB:ENSMUSG00000016253"/>
<dbReference type="eggNOG" id="ENOG502QPUE">
    <property type="taxonomic scope" value="Eukaryota"/>
</dbReference>
<dbReference type="GeneTree" id="ENSGT00390000001799"/>
<dbReference type="InParanoid" id="Q922L6"/>
<dbReference type="OMA" id="CHSEHTY"/>
<dbReference type="Reactome" id="R-MMU-112382">
    <property type="pathway name" value="Formation of RNA Pol II elongation complex"/>
</dbReference>
<dbReference type="Reactome" id="R-MMU-113418">
    <property type="pathway name" value="Formation of the Early Elongation Complex"/>
</dbReference>
<dbReference type="Reactome" id="R-MMU-674695">
    <property type="pathway name" value="RNA Polymerase II Pre-transcription Events"/>
</dbReference>
<dbReference type="Reactome" id="R-MMU-6796648">
    <property type="pathway name" value="TP53 Regulates Transcription of DNA Repair Genes"/>
</dbReference>
<dbReference type="Reactome" id="R-MMU-75955">
    <property type="pathway name" value="RNA Polymerase II Transcription Elongation"/>
</dbReference>
<dbReference type="BioGRID-ORCS" id="57314">
    <property type="hits" value="20 hits in 78 CRISPR screens"/>
</dbReference>
<dbReference type="ChiTaRS" id="Nelfcd">
    <property type="organism name" value="mouse"/>
</dbReference>
<dbReference type="PRO" id="PR:Q922L6"/>
<dbReference type="Proteomes" id="UP000000589">
    <property type="component" value="Chromosome 2"/>
</dbReference>
<dbReference type="RNAct" id="Q922L6">
    <property type="molecule type" value="protein"/>
</dbReference>
<dbReference type="Bgee" id="ENSMUSG00000016253">
    <property type="expression patterns" value="Expressed in embryonic brain and 273 other cell types or tissues"/>
</dbReference>
<dbReference type="ExpressionAtlas" id="Q922L6">
    <property type="expression patterns" value="baseline and differential"/>
</dbReference>
<dbReference type="GO" id="GO:0032021">
    <property type="term" value="C:NELF complex"/>
    <property type="evidence" value="ECO:0000250"/>
    <property type="project" value="UniProtKB"/>
</dbReference>
<dbReference type="GO" id="GO:0003723">
    <property type="term" value="F:RNA binding"/>
    <property type="evidence" value="ECO:0007669"/>
    <property type="project" value="UniProtKB-KW"/>
</dbReference>
<dbReference type="GO" id="GO:0034244">
    <property type="term" value="P:negative regulation of transcription elongation by RNA polymerase II"/>
    <property type="evidence" value="ECO:0007669"/>
    <property type="project" value="Ensembl"/>
</dbReference>
<dbReference type="InterPro" id="IPR006942">
    <property type="entry name" value="TH1"/>
</dbReference>
<dbReference type="PANTHER" id="PTHR12144:SF0">
    <property type="entry name" value="NEGATIVE ELONGATION FACTOR C_D"/>
    <property type="match status" value="1"/>
</dbReference>
<dbReference type="PANTHER" id="PTHR12144">
    <property type="entry name" value="NEGATIVE ELONGATION FACTOR D"/>
    <property type="match status" value="1"/>
</dbReference>
<dbReference type="Pfam" id="PF04858">
    <property type="entry name" value="TH1"/>
    <property type="match status" value="1"/>
</dbReference>
<name>NELFD_MOUSE</name>
<protein>
    <recommendedName>
        <fullName>Negative elongation factor D</fullName>
        <shortName>NELF-D</shortName>
    </recommendedName>
    <alternativeName>
        <fullName>TH1-like protein</fullName>
    </alternativeName>
</protein>
<comment type="function">
    <text evidence="1">Essential component of the NELF complex, a complex that negatively regulates the elongation of transcription by RNA polymerase II (By similarity). The NELF complex, which acts via an association with the DSIF complex and causes transcriptional pausing, is counteracted by the P-TEFb kinase complex (By similarity).</text>
</comment>
<comment type="subunit">
    <text evidence="1 3 4">The NELF complex is composed of NELFA, NELFB, NELFCD and NELFE; NELFA and NELFCD form a stable subcomplex that binds primarily through NELFCD to the N-terminus of NELFB (By similarity). Binds RNA which may help to stabilize the NELF complex on nucleic acid (By similarity). In vitro, the NELFA:NELFCD subcomplex binds to ssDNA and ssRNA in a sequence- and structure-dependent manner (By similarity). Interacts with ARAF1 (By similarity). Interacts with PCF11 (By similarity). Interacts with NELFB (PubMed:26010750). Interacts with KAT8 (PubMed:17335777).</text>
</comment>
<comment type="subcellular location">
    <subcellularLocation>
        <location evidence="1">Nucleus</location>
    </subcellularLocation>
</comment>
<comment type="similarity">
    <text evidence="5">Belongs to the NELF-D family.</text>
</comment>
<comment type="sequence caution" evidence="5">
    <conflict type="erroneous initiation">
        <sequence resource="EMBL-CDS" id="AAH31747"/>
    </conflict>
</comment>
<comment type="sequence caution" evidence="5">
    <conflict type="erroneous initiation">
        <sequence resource="EMBL-CDS" id="BAB26880"/>
    </conflict>
</comment>
<comment type="sequence caution" evidence="5">
    <conflict type="erroneous initiation">
        <sequence resource="EMBL-CDS" id="BAC33744"/>
    </conflict>
</comment>
<comment type="sequence caution" evidence="5">
    <conflict type="erroneous initiation">
        <sequence resource="EMBL-CDS" id="CAB65252"/>
    </conflict>
</comment>
<comment type="sequence caution" evidence="5">
    <conflict type="erroneous initiation">
        <sequence resource="EMBL-CDS" id="CAB65253"/>
    </conflict>
</comment>
<comment type="sequence caution" evidence="5">
    <conflict type="erroneous initiation">
        <sequence resource="EMBL-CDS" id="CAB65254"/>
    </conflict>
</comment>
<keyword id="KW-0539">Nucleus</keyword>
<keyword id="KW-1185">Reference proteome</keyword>
<keyword id="KW-0678">Repressor</keyword>
<keyword id="KW-0694">RNA-binding</keyword>
<keyword id="KW-0804">Transcription</keyword>
<keyword id="KW-0805">Transcription regulation</keyword>
<accession>Q922L6</accession>
<accession>A2AQ05</accession>
<accession>Q9QXC8</accession>
<accession>Q9QXC9</accession>
<accession>Q9QXD0</accession>
<evidence type="ECO:0000250" key="1">
    <source>
        <dbReference type="UniProtKB" id="Q8IXH7"/>
    </source>
</evidence>
<evidence type="ECO:0000256" key="2">
    <source>
        <dbReference type="SAM" id="MobiDB-lite"/>
    </source>
</evidence>
<evidence type="ECO:0000269" key="3">
    <source>
    </source>
</evidence>
<evidence type="ECO:0000269" key="4">
    <source>
    </source>
</evidence>
<evidence type="ECO:0000305" key="5"/>
<gene>
    <name type="primary">Nelfcd</name>
    <name type="synonym">Nelfd</name>
    <name type="synonym">Th1</name>
    <name type="synonym">Th1l</name>
</gene>
<feature type="chain" id="PRO_0000219132" description="Negative elongation factor D">
    <location>
        <begin position="1"/>
        <end position="591"/>
    </location>
</feature>
<feature type="region of interest" description="Disordered" evidence="2">
    <location>
        <begin position="1"/>
        <end position="44"/>
    </location>
</feature>
<feature type="compositionally biased region" description="Acidic residues" evidence="2">
    <location>
        <begin position="34"/>
        <end position="44"/>
    </location>
</feature>
<feature type="sequence conflict" description="In Ref. 4; AAH06959." evidence="5" ref="4">
    <original>G</original>
    <variation>V</variation>
    <location>
        <position position="38"/>
    </location>
</feature>
<feature type="sequence conflict" description="In Ref. 1; CAB65253." evidence="5" ref="1">
    <original>Y</original>
    <variation>C</variation>
    <location>
        <position position="416"/>
    </location>
</feature>
<feature type="sequence conflict" description="In Ref. 1; CAB65254." evidence="5" ref="1">
    <original>E</original>
    <variation>G</variation>
    <location>
        <position position="479"/>
    </location>
</feature>
<organism>
    <name type="scientific">Mus musculus</name>
    <name type="common">Mouse</name>
    <dbReference type="NCBI Taxonomy" id="10090"/>
    <lineage>
        <taxon>Eukaryota</taxon>
        <taxon>Metazoa</taxon>
        <taxon>Chordata</taxon>
        <taxon>Craniata</taxon>
        <taxon>Vertebrata</taxon>
        <taxon>Euteleostomi</taxon>
        <taxon>Mammalia</taxon>
        <taxon>Eutheria</taxon>
        <taxon>Euarchontoglires</taxon>
        <taxon>Glires</taxon>
        <taxon>Rodentia</taxon>
        <taxon>Myomorpha</taxon>
        <taxon>Muroidea</taxon>
        <taxon>Muridae</taxon>
        <taxon>Murinae</taxon>
        <taxon>Mus</taxon>
        <taxon>Mus</taxon>
    </lineage>
</organism>
<sequence>MAGPAPGTIMGEDYFGNASEWGEEADGGQHQEDDSGEGEDDAEVQQECLHKFSTRDYIMEPSIFNTLKRYFQAGGSPENVIQLLSENYTAVAQTVNLLAEWLIQTGVEPVQVQETVENHLKSLLIKHFDPRKADSIFTEEGETPAWLEQMIAHTTWRDLFYKLAEAHPDCLMLNFTVKLISDAGYQGEITSVSTACQQLEVFSRVLRTSLATILDGGEENLEKNLPEFAKMVCHGEHTYLFAQAMMSVLAQEEQGGSAVRRVAQEVQRFAQEKGHDASQITLALGTAASYPRACQALGAMLSRGALNPADITVLFKMFTSMDPPPVELIRVPAFLDLFMQSLFKPGAKINQDHKHKYIHILAYAASVVETWKKNKRVSIGKDELKSTSKAIETVHNLCCNENKGASELVAELSTLYQCIRFPVVAMGVLKWVDWTVSEPRYFQLQTDHTPVHLALLDEISTCHQLLHPQVLQLLVKLFETEHSQLDVMEQLELKKTLLDRMVHLLSRGYVLPVVSYIRKCLEKLDTDISLIRYFVTEVLDVIAPPYTSDFVQLFLPILENDSIAGTIKAEGEHDPVTEFIAHCKSNFIVVN</sequence>
<proteinExistence type="evidence at protein level"/>